<feature type="signal peptide" evidence="2">
    <location>
        <begin position="1"/>
        <end position="20"/>
    </location>
</feature>
<feature type="propeptide" id="PRO_0000340306" evidence="1">
    <location>
        <begin position="21"/>
        <end position="191"/>
    </location>
</feature>
<feature type="chain" id="PRO_0000340307" description="Zinc metalloproteinase-disintegrin-like stejnihagin-A">
    <location>
        <begin position="192"/>
        <end position="600"/>
    </location>
</feature>
<feature type="domain" description="Peptidase M12B" evidence="4">
    <location>
        <begin position="198"/>
        <end position="389"/>
    </location>
</feature>
<feature type="domain" description="Disintegrin" evidence="3">
    <location>
        <begin position="397"/>
        <end position="483"/>
    </location>
</feature>
<feature type="short sequence motif" description="D/ECD-tripeptide">
    <location>
        <begin position="461"/>
        <end position="463"/>
    </location>
</feature>
<feature type="active site" evidence="4 5">
    <location>
        <position position="332"/>
    </location>
</feature>
<feature type="binding site" evidence="1">
    <location>
        <position position="331"/>
    </location>
    <ligand>
        <name>Zn(2+)</name>
        <dbReference type="ChEBI" id="CHEBI:29105"/>
        <note>catalytic</note>
    </ligand>
</feature>
<feature type="binding site" evidence="1">
    <location>
        <position position="335"/>
    </location>
    <ligand>
        <name>Zn(2+)</name>
        <dbReference type="ChEBI" id="CHEBI:29105"/>
        <note>catalytic</note>
    </ligand>
</feature>
<feature type="binding site" evidence="1">
    <location>
        <position position="341"/>
    </location>
    <ligand>
        <name>Zn(2+)</name>
        <dbReference type="ChEBI" id="CHEBI:29105"/>
        <note>catalytic</note>
    </ligand>
</feature>
<feature type="binding site" evidence="1">
    <location>
        <position position="399"/>
    </location>
    <ligand>
        <name>Ca(2+)</name>
        <dbReference type="ChEBI" id="CHEBI:29108"/>
    </ligand>
</feature>
<feature type="binding site" evidence="1">
    <location>
        <position position="402"/>
    </location>
    <ligand>
        <name>Ca(2+)</name>
        <dbReference type="ChEBI" id="CHEBI:29108"/>
    </ligand>
</feature>
<feature type="binding site" evidence="1">
    <location>
        <position position="404"/>
    </location>
    <ligand>
        <name>Ca(2+)</name>
        <dbReference type="ChEBI" id="CHEBI:29108"/>
    </ligand>
</feature>
<feature type="binding site" evidence="1">
    <location>
        <position position="406"/>
    </location>
    <ligand>
        <name>Ca(2+)</name>
        <dbReference type="ChEBI" id="CHEBI:29108"/>
    </ligand>
</feature>
<feature type="binding site" evidence="1">
    <location>
        <position position="409"/>
    </location>
    <ligand>
        <name>Ca(2+)</name>
        <dbReference type="ChEBI" id="CHEBI:29108"/>
    </ligand>
</feature>
<feature type="binding site" evidence="1">
    <location>
        <position position="412"/>
    </location>
    <ligand>
        <name>Ca(2+)</name>
        <dbReference type="ChEBI" id="CHEBI:29108"/>
    </ligand>
</feature>
<feature type="modified residue" description="Pyrrolidone carboxylic acid" evidence="1">
    <location>
        <position position="192"/>
    </location>
</feature>
<feature type="glycosylation site" description="N-linked (GlcNAc...) asparagine" evidence="2">
    <location>
        <position position="317"/>
    </location>
</feature>
<feature type="glycosylation site" description="N-linked (GlcNAc...) asparagine" evidence="2">
    <location>
        <position position="367"/>
    </location>
</feature>
<feature type="glycosylation site" description="N-linked (GlcNAc...) asparagine" evidence="2">
    <location>
        <position position="568"/>
    </location>
</feature>
<feature type="disulfide bond" evidence="1">
    <location>
        <begin position="306"/>
        <end position="384"/>
    </location>
</feature>
<feature type="disulfide bond" evidence="1">
    <location>
        <begin position="346"/>
        <end position="368"/>
    </location>
</feature>
<feature type="disulfide bond" evidence="1">
    <location>
        <begin position="348"/>
        <end position="351"/>
    </location>
</feature>
<feature type="disulfide bond" evidence="1">
    <location>
        <begin position="400"/>
        <end position="429"/>
    </location>
</feature>
<feature type="disulfide bond" evidence="1">
    <location>
        <begin position="411"/>
        <end position="424"/>
    </location>
</feature>
<feature type="disulfide bond" evidence="1">
    <location>
        <begin position="413"/>
        <end position="419"/>
    </location>
</feature>
<feature type="disulfide bond" evidence="1">
    <location>
        <begin position="423"/>
        <end position="446"/>
    </location>
</feature>
<feature type="disulfide bond" evidence="1">
    <location>
        <begin position="437"/>
        <end position="443"/>
    </location>
</feature>
<feature type="disulfide bond" evidence="1">
    <location>
        <begin position="442"/>
        <end position="468"/>
    </location>
</feature>
<feature type="disulfide bond" evidence="1">
    <location>
        <begin position="455"/>
        <end position="475"/>
    </location>
</feature>
<feature type="disulfide bond" evidence="1">
    <location>
        <begin position="462"/>
        <end position="494"/>
    </location>
</feature>
<feature type="disulfide bond" evidence="1">
    <location>
        <begin position="487"/>
        <end position="499"/>
    </location>
</feature>
<feature type="disulfide bond" evidence="1">
    <location>
        <begin position="506"/>
        <end position="556"/>
    </location>
</feature>
<feature type="disulfide bond" evidence="1">
    <location>
        <begin position="521"/>
        <end position="565"/>
    </location>
</feature>
<feature type="disulfide bond" evidence="1">
    <location>
        <begin position="534"/>
        <end position="544"/>
    </location>
</feature>
<feature type="disulfide bond" evidence="1">
    <location>
        <begin position="551"/>
        <end position="587"/>
    </location>
</feature>
<feature type="disulfide bond" evidence="1">
    <location>
        <begin position="581"/>
        <end position="593"/>
    </location>
</feature>
<dbReference type="EC" id="3.4.24.-"/>
<dbReference type="EMBL" id="DQ195154">
    <property type="protein sequence ID" value="ABA40760.1"/>
    <property type="molecule type" value="mRNA"/>
</dbReference>
<dbReference type="SMR" id="Q3HTN1"/>
<dbReference type="MEROPS" id="M12.154"/>
<dbReference type="GO" id="GO:0005576">
    <property type="term" value="C:extracellular region"/>
    <property type="evidence" value="ECO:0007669"/>
    <property type="project" value="UniProtKB-SubCell"/>
</dbReference>
<dbReference type="GO" id="GO:0005886">
    <property type="term" value="C:plasma membrane"/>
    <property type="evidence" value="ECO:0007669"/>
    <property type="project" value="TreeGrafter"/>
</dbReference>
<dbReference type="GO" id="GO:0046872">
    <property type="term" value="F:metal ion binding"/>
    <property type="evidence" value="ECO:0007669"/>
    <property type="project" value="UniProtKB-KW"/>
</dbReference>
<dbReference type="GO" id="GO:0004222">
    <property type="term" value="F:metalloendopeptidase activity"/>
    <property type="evidence" value="ECO:0007669"/>
    <property type="project" value="InterPro"/>
</dbReference>
<dbReference type="GO" id="GO:0090729">
    <property type="term" value="F:toxin activity"/>
    <property type="evidence" value="ECO:0007669"/>
    <property type="project" value="UniProtKB-KW"/>
</dbReference>
<dbReference type="GO" id="GO:0006508">
    <property type="term" value="P:proteolysis"/>
    <property type="evidence" value="ECO:0007669"/>
    <property type="project" value="UniProtKB-KW"/>
</dbReference>
<dbReference type="CDD" id="cd04269">
    <property type="entry name" value="ZnMc_adamalysin_II_like"/>
    <property type="match status" value="1"/>
</dbReference>
<dbReference type="FunFam" id="3.40.390.10:FF:000002">
    <property type="entry name" value="Disintegrin and metalloproteinase domain-containing protein 22"/>
    <property type="match status" value="1"/>
</dbReference>
<dbReference type="FunFam" id="4.10.70.10:FF:000001">
    <property type="entry name" value="Disintegrin and metalloproteinase domain-containing protein 22"/>
    <property type="match status" value="1"/>
</dbReference>
<dbReference type="Gene3D" id="3.40.390.10">
    <property type="entry name" value="Collagenase (Catalytic Domain)"/>
    <property type="match status" value="1"/>
</dbReference>
<dbReference type="Gene3D" id="4.10.70.10">
    <property type="entry name" value="Disintegrin domain"/>
    <property type="match status" value="1"/>
</dbReference>
<dbReference type="InterPro" id="IPR006586">
    <property type="entry name" value="ADAM_Cys-rich"/>
</dbReference>
<dbReference type="InterPro" id="IPR018358">
    <property type="entry name" value="Disintegrin_CS"/>
</dbReference>
<dbReference type="InterPro" id="IPR001762">
    <property type="entry name" value="Disintegrin_dom"/>
</dbReference>
<dbReference type="InterPro" id="IPR036436">
    <property type="entry name" value="Disintegrin_dom_sf"/>
</dbReference>
<dbReference type="InterPro" id="IPR024079">
    <property type="entry name" value="MetalloPept_cat_dom_sf"/>
</dbReference>
<dbReference type="InterPro" id="IPR001590">
    <property type="entry name" value="Peptidase_M12B"/>
</dbReference>
<dbReference type="InterPro" id="IPR002870">
    <property type="entry name" value="Peptidase_M12B_N"/>
</dbReference>
<dbReference type="InterPro" id="IPR034027">
    <property type="entry name" value="Reprolysin_adamalysin"/>
</dbReference>
<dbReference type="PANTHER" id="PTHR11905">
    <property type="entry name" value="ADAM A DISINTEGRIN AND METALLOPROTEASE DOMAIN"/>
    <property type="match status" value="1"/>
</dbReference>
<dbReference type="PANTHER" id="PTHR11905:SF32">
    <property type="entry name" value="DISINTEGRIN AND METALLOPROTEINASE DOMAIN-CONTAINING PROTEIN 28"/>
    <property type="match status" value="1"/>
</dbReference>
<dbReference type="Pfam" id="PF08516">
    <property type="entry name" value="ADAM_CR"/>
    <property type="match status" value="1"/>
</dbReference>
<dbReference type="Pfam" id="PF00200">
    <property type="entry name" value="Disintegrin"/>
    <property type="match status" value="1"/>
</dbReference>
<dbReference type="Pfam" id="PF01562">
    <property type="entry name" value="Pep_M12B_propep"/>
    <property type="match status" value="1"/>
</dbReference>
<dbReference type="Pfam" id="PF01421">
    <property type="entry name" value="Reprolysin"/>
    <property type="match status" value="1"/>
</dbReference>
<dbReference type="PRINTS" id="PR00289">
    <property type="entry name" value="DISINTEGRIN"/>
</dbReference>
<dbReference type="SMART" id="SM00608">
    <property type="entry name" value="ACR"/>
    <property type="match status" value="1"/>
</dbReference>
<dbReference type="SMART" id="SM00050">
    <property type="entry name" value="DISIN"/>
    <property type="match status" value="1"/>
</dbReference>
<dbReference type="SUPFAM" id="SSF57552">
    <property type="entry name" value="Blood coagulation inhibitor (disintegrin)"/>
    <property type="match status" value="1"/>
</dbReference>
<dbReference type="SUPFAM" id="SSF55486">
    <property type="entry name" value="Metalloproteases ('zincins'), catalytic domain"/>
    <property type="match status" value="1"/>
</dbReference>
<dbReference type="PROSITE" id="PS50215">
    <property type="entry name" value="ADAM_MEPRO"/>
    <property type="match status" value="1"/>
</dbReference>
<dbReference type="PROSITE" id="PS00427">
    <property type="entry name" value="DISINTEGRIN_1"/>
    <property type="match status" value="1"/>
</dbReference>
<dbReference type="PROSITE" id="PS50214">
    <property type="entry name" value="DISINTEGRIN_2"/>
    <property type="match status" value="1"/>
</dbReference>
<dbReference type="PROSITE" id="PS00142">
    <property type="entry name" value="ZINC_PROTEASE"/>
    <property type="match status" value="1"/>
</dbReference>
<comment type="function">
    <text evidence="1">This metalloproteinase-disintegrin-like impairs hemostasis in the envenomed animal.</text>
</comment>
<comment type="cofactor">
    <cofactor evidence="1">
        <name>Zn(2+)</name>
        <dbReference type="ChEBI" id="CHEBI:29105"/>
    </cofactor>
    <text evidence="1">Binds 1 zinc ion per subunit.</text>
</comment>
<comment type="subunit">
    <text evidence="1">Monomer.</text>
</comment>
<comment type="subcellular location">
    <subcellularLocation>
        <location evidence="1">Secreted</location>
    </subcellularLocation>
</comment>
<comment type="tissue specificity">
    <text>Expressed by the venom gland.</text>
</comment>
<comment type="similarity">
    <text evidence="6">Belongs to the venom metalloproteinase (M12B) family. P-III subfamily. P-IIIa sub-subfamily.</text>
</comment>
<sequence length="600" mass="67805">MIEVLLVTICLAVFPYQGSSIILESGNVNDYEVVYPRKVTTLPKGALQQNYEDAMQYEFKVNGEPVVLHLEKNKELFSEDYSETHYSPDGREITTYPSVEDHCYYHGRIQNEADSTASISACNGLKGHFKLQGETYLIEPLKLPDSEAHAVFKYENVVKEDEAPKMCGVTETNWKSDEPIKKASQLVVTAEQQRFPRRYVKLAIVADRRMYMKHQKNLKPWVFQMVNSVHQIYRSMNVLIALVYLNIWKKNDKITVQSASDVTLDLFAEWRETVLLRRKKHDCAHLLTAIDFDGPTIGRAHIASMCNSKLSVGIVQNYTEINLVNAIVMAHELGHNLGISHDGNQCNCHTCIMSAVISNPPSERFSNCSEDYHQSFLTAYNPQCILNAPSKTDIITPPVCGNELLEEGEECDCGSPENCQYQCCDAASCKLHSWVKCESGECCDQCRFTSAGTECRAARSECDIAESCTGQSADCPTDDFHRNGQPCLSNHGYCYNGNCPVMHYQCIALFGSNAIVGQDECFDFNMKGEQYFYCRKEYEKYIPCAQEDVKCGRLFCFYTNNMDICRYNYSDIGIVDHGTKCADGKVCNSNRHCVDVTTVY</sequence>
<name>VM3SA_TRIST</name>
<protein>
    <recommendedName>
        <fullName>Zinc metalloproteinase-disintegrin-like stejnihagin-A</fullName>
        <ecNumber>3.4.24.-</ecNumber>
    </recommendedName>
    <alternativeName>
        <fullName>Snake venom metalloproteinase</fullName>
        <shortName>SVMP</shortName>
    </alternativeName>
</protein>
<accession>Q3HTN1</accession>
<keyword id="KW-0106">Calcium</keyword>
<keyword id="KW-1217">Cell adhesion impairing toxin</keyword>
<keyword id="KW-1015">Disulfide bond</keyword>
<keyword id="KW-0325">Glycoprotein</keyword>
<keyword id="KW-1199">Hemostasis impairing toxin</keyword>
<keyword id="KW-0378">Hydrolase</keyword>
<keyword id="KW-0479">Metal-binding</keyword>
<keyword id="KW-0482">Metalloprotease</keyword>
<keyword id="KW-1201">Platelet aggregation inhibiting toxin</keyword>
<keyword id="KW-0645">Protease</keyword>
<keyword id="KW-0873">Pyrrolidone carboxylic acid</keyword>
<keyword id="KW-0964">Secreted</keyword>
<keyword id="KW-0732">Signal</keyword>
<keyword id="KW-0800">Toxin</keyword>
<keyword id="KW-0862">Zinc</keyword>
<keyword id="KW-0865">Zymogen</keyword>
<evidence type="ECO:0000250" key="1"/>
<evidence type="ECO:0000255" key="2"/>
<evidence type="ECO:0000255" key="3">
    <source>
        <dbReference type="PROSITE-ProRule" id="PRU00068"/>
    </source>
</evidence>
<evidence type="ECO:0000255" key="4">
    <source>
        <dbReference type="PROSITE-ProRule" id="PRU00276"/>
    </source>
</evidence>
<evidence type="ECO:0000255" key="5">
    <source>
        <dbReference type="PROSITE-ProRule" id="PRU10095"/>
    </source>
</evidence>
<evidence type="ECO:0000305" key="6"/>
<reference key="1">
    <citation type="journal article" date="2006" name="Toxicon">
        <title>Cloning of two novel P-III class metalloproteinases from Trimeresurus stejnegeri venom gland.</title>
        <authorList>
            <person name="Wan S.-G."/>
            <person name="Jin Y."/>
            <person name="Lee W.-H."/>
            <person name="Zhang Y."/>
        </authorList>
    </citation>
    <scope>NUCLEOTIDE SEQUENCE [MRNA]</scope>
    <source>
        <tissue>Venom gland</tissue>
    </source>
</reference>
<organism>
    <name type="scientific">Trimeresurus stejnegeri</name>
    <name type="common">Chinese green tree viper</name>
    <name type="synonym">Viridovipera stejnegeri</name>
    <dbReference type="NCBI Taxonomy" id="39682"/>
    <lineage>
        <taxon>Eukaryota</taxon>
        <taxon>Metazoa</taxon>
        <taxon>Chordata</taxon>
        <taxon>Craniata</taxon>
        <taxon>Vertebrata</taxon>
        <taxon>Euteleostomi</taxon>
        <taxon>Lepidosauria</taxon>
        <taxon>Squamata</taxon>
        <taxon>Bifurcata</taxon>
        <taxon>Unidentata</taxon>
        <taxon>Episquamata</taxon>
        <taxon>Toxicofera</taxon>
        <taxon>Serpentes</taxon>
        <taxon>Colubroidea</taxon>
        <taxon>Viperidae</taxon>
        <taxon>Crotalinae</taxon>
        <taxon>Trimeresurus</taxon>
    </lineage>
</organism>
<proteinExistence type="evidence at transcript level"/>